<accession>A2YW91</accession>
<name>PLP2_ORYSI</name>
<dbReference type="EC" id="3.1.1.-"/>
<dbReference type="EMBL" id="CM000133">
    <property type="protein sequence ID" value="EAZ07352.1"/>
    <property type="molecule type" value="Genomic_DNA"/>
</dbReference>
<dbReference type="SMR" id="A2YW91"/>
<dbReference type="STRING" id="39946.A2YW91"/>
<dbReference type="EnsemblPlants" id="BGIOSGA026808-TA">
    <property type="protein sequence ID" value="BGIOSGA026808-PA"/>
    <property type="gene ID" value="BGIOSGA026808"/>
</dbReference>
<dbReference type="Gramene" id="BGIOSGA026808-TA">
    <property type="protein sequence ID" value="BGIOSGA026808-PA"/>
    <property type="gene ID" value="BGIOSGA026808"/>
</dbReference>
<dbReference type="HOGENOM" id="CLU_000288_144_0_1"/>
<dbReference type="OMA" id="TYFKPIM"/>
<dbReference type="Proteomes" id="UP000007015">
    <property type="component" value="Chromosome 8"/>
</dbReference>
<dbReference type="GO" id="GO:0047372">
    <property type="term" value="F:monoacylglycerol lipase activity"/>
    <property type="evidence" value="ECO:0007669"/>
    <property type="project" value="TreeGrafter"/>
</dbReference>
<dbReference type="GO" id="GO:0004620">
    <property type="term" value="F:phospholipase activity"/>
    <property type="evidence" value="ECO:0007669"/>
    <property type="project" value="TreeGrafter"/>
</dbReference>
<dbReference type="GO" id="GO:0006952">
    <property type="term" value="P:defense response"/>
    <property type="evidence" value="ECO:0007669"/>
    <property type="project" value="UniProtKB-KW"/>
</dbReference>
<dbReference type="GO" id="GO:0016042">
    <property type="term" value="P:lipid catabolic process"/>
    <property type="evidence" value="ECO:0007669"/>
    <property type="project" value="UniProtKB-KW"/>
</dbReference>
<dbReference type="CDD" id="cd07214">
    <property type="entry name" value="Pat17_isozyme_like"/>
    <property type="match status" value="1"/>
</dbReference>
<dbReference type="FunFam" id="3.40.1090.10:FF:000005">
    <property type="entry name" value="Patatin"/>
    <property type="match status" value="1"/>
</dbReference>
<dbReference type="Gene3D" id="3.40.1090.10">
    <property type="entry name" value="Cytosolic phospholipase A2 catalytic domain"/>
    <property type="match status" value="1"/>
</dbReference>
<dbReference type="InterPro" id="IPR016035">
    <property type="entry name" value="Acyl_Trfase/lysoPLipase"/>
</dbReference>
<dbReference type="InterPro" id="IPR002641">
    <property type="entry name" value="PNPLA_dom"/>
</dbReference>
<dbReference type="PANTHER" id="PTHR32176:SF26">
    <property type="entry name" value="PATATIN-LIKE PROTEIN 2"/>
    <property type="match status" value="1"/>
</dbReference>
<dbReference type="PANTHER" id="PTHR32176">
    <property type="entry name" value="XYLOSE ISOMERASE"/>
    <property type="match status" value="1"/>
</dbReference>
<dbReference type="Pfam" id="PF01734">
    <property type="entry name" value="Patatin"/>
    <property type="match status" value="1"/>
</dbReference>
<dbReference type="SUPFAM" id="SSF52151">
    <property type="entry name" value="FabD/lysophospholipase-like"/>
    <property type="match status" value="1"/>
</dbReference>
<dbReference type="PROSITE" id="PS51635">
    <property type="entry name" value="PNPLA"/>
    <property type="match status" value="1"/>
</dbReference>
<organism>
    <name type="scientific">Oryza sativa subsp. indica</name>
    <name type="common">Rice</name>
    <dbReference type="NCBI Taxonomy" id="39946"/>
    <lineage>
        <taxon>Eukaryota</taxon>
        <taxon>Viridiplantae</taxon>
        <taxon>Streptophyta</taxon>
        <taxon>Embryophyta</taxon>
        <taxon>Tracheophyta</taxon>
        <taxon>Spermatophyta</taxon>
        <taxon>Magnoliopsida</taxon>
        <taxon>Liliopsida</taxon>
        <taxon>Poales</taxon>
        <taxon>Poaceae</taxon>
        <taxon>BOP clade</taxon>
        <taxon>Oryzoideae</taxon>
        <taxon>Oryzeae</taxon>
        <taxon>Oryzinae</taxon>
        <taxon>Oryza</taxon>
        <taxon>Oryza sativa</taxon>
    </lineage>
</organism>
<protein>
    <recommendedName>
        <fullName>Patatin-like protein 2</fullName>
        <ecNumber>3.1.1.-</ecNumber>
    </recommendedName>
</protein>
<evidence type="ECO:0000250" key="1"/>
<evidence type="ECO:0000255" key="2">
    <source>
        <dbReference type="PROSITE-ProRule" id="PRU01161"/>
    </source>
</evidence>
<evidence type="ECO:0000305" key="3"/>
<sequence length="405" mass="44494">MASASSPEGASSSSPEKVKMVTVLSIDGGGVRGIIPATILAFLEKELQKLDGPDARIADYFDVVAGTSTGGLLTAMLTAPNENNRPLFAADELAKFYIEHSPSIFPQKNWVLSKIAGTLRMVSGPKYDGKYLHSLLREKLGDTRLDKALTNVVIPTFDIANLQPTIFSKFELKYKPLKNALLSDISISTSAAPTFFPAHYFETKDDNGQTREFNLVDGGVAANNPTLCAMSQVSKYIILEDKEDCDFFPVKPTEYGKFMVISIGCGSNHDQKYKAKDAAKWGIFNWLIKGSSAPIIDMFTSASADMVDIHLGVLFSALQCEKNYLRIQYDQLTGSAGSIDDCSKENMDNLVKIGEMLLDKNVSRVDLETGHYVDVAGEGTNRDQLAKFAKQLSDERRRRQNEPSN</sequence>
<keyword id="KW-0378">Hydrolase</keyword>
<keyword id="KW-0442">Lipid degradation</keyword>
<keyword id="KW-0443">Lipid metabolism</keyword>
<keyword id="KW-0611">Plant defense</keyword>
<keyword id="KW-1185">Reference proteome</keyword>
<reference key="1">
    <citation type="journal article" date="2005" name="PLoS Biol.">
        <title>The genomes of Oryza sativa: a history of duplications.</title>
        <authorList>
            <person name="Yu J."/>
            <person name="Wang J."/>
            <person name="Lin W."/>
            <person name="Li S."/>
            <person name="Li H."/>
            <person name="Zhou J."/>
            <person name="Ni P."/>
            <person name="Dong W."/>
            <person name="Hu S."/>
            <person name="Zeng C."/>
            <person name="Zhang J."/>
            <person name="Zhang Y."/>
            <person name="Li R."/>
            <person name="Xu Z."/>
            <person name="Li S."/>
            <person name="Li X."/>
            <person name="Zheng H."/>
            <person name="Cong L."/>
            <person name="Lin L."/>
            <person name="Yin J."/>
            <person name="Geng J."/>
            <person name="Li G."/>
            <person name="Shi J."/>
            <person name="Liu J."/>
            <person name="Lv H."/>
            <person name="Li J."/>
            <person name="Wang J."/>
            <person name="Deng Y."/>
            <person name="Ran L."/>
            <person name="Shi X."/>
            <person name="Wang X."/>
            <person name="Wu Q."/>
            <person name="Li C."/>
            <person name="Ren X."/>
            <person name="Wang J."/>
            <person name="Wang X."/>
            <person name="Li D."/>
            <person name="Liu D."/>
            <person name="Zhang X."/>
            <person name="Ji Z."/>
            <person name="Zhao W."/>
            <person name="Sun Y."/>
            <person name="Zhang Z."/>
            <person name="Bao J."/>
            <person name="Han Y."/>
            <person name="Dong L."/>
            <person name="Ji J."/>
            <person name="Chen P."/>
            <person name="Wu S."/>
            <person name="Liu J."/>
            <person name="Xiao Y."/>
            <person name="Bu D."/>
            <person name="Tan J."/>
            <person name="Yang L."/>
            <person name="Ye C."/>
            <person name="Zhang J."/>
            <person name="Xu J."/>
            <person name="Zhou Y."/>
            <person name="Yu Y."/>
            <person name="Zhang B."/>
            <person name="Zhuang S."/>
            <person name="Wei H."/>
            <person name="Liu B."/>
            <person name="Lei M."/>
            <person name="Yu H."/>
            <person name="Li Y."/>
            <person name="Xu H."/>
            <person name="Wei S."/>
            <person name="He X."/>
            <person name="Fang L."/>
            <person name="Zhang Z."/>
            <person name="Zhang Y."/>
            <person name="Huang X."/>
            <person name="Su Z."/>
            <person name="Tong W."/>
            <person name="Li J."/>
            <person name="Tong Z."/>
            <person name="Li S."/>
            <person name="Ye J."/>
            <person name="Wang L."/>
            <person name="Fang L."/>
            <person name="Lei T."/>
            <person name="Chen C.-S."/>
            <person name="Chen H.-C."/>
            <person name="Xu Z."/>
            <person name="Li H."/>
            <person name="Huang H."/>
            <person name="Zhang F."/>
            <person name="Xu H."/>
            <person name="Li N."/>
            <person name="Zhao C."/>
            <person name="Li S."/>
            <person name="Dong L."/>
            <person name="Huang Y."/>
            <person name="Li L."/>
            <person name="Xi Y."/>
            <person name="Qi Q."/>
            <person name="Li W."/>
            <person name="Zhang B."/>
            <person name="Hu W."/>
            <person name="Zhang Y."/>
            <person name="Tian X."/>
            <person name="Jiao Y."/>
            <person name="Liang X."/>
            <person name="Jin J."/>
            <person name="Gao L."/>
            <person name="Zheng W."/>
            <person name="Hao B."/>
            <person name="Liu S.-M."/>
            <person name="Wang W."/>
            <person name="Yuan L."/>
            <person name="Cao M."/>
            <person name="McDermott J."/>
            <person name="Samudrala R."/>
            <person name="Wang J."/>
            <person name="Wong G.K.-S."/>
            <person name="Yang H."/>
        </authorList>
    </citation>
    <scope>NUCLEOTIDE SEQUENCE [LARGE SCALE GENOMIC DNA]</scope>
    <source>
        <strain>cv. 93-11</strain>
    </source>
</reference>
<proteinExistence type="inferred from homology"/>
<gene>
    <name type="primary">PLP2</name>
    <name type="ORF">OsI_29602</name>
</gene>
<feature type="chain" id="PRO_0000425826" description="Patatin-like protein 2">
    <location>
        <begin position="1"/>
        <end position="405"/>
    </location>
</feature>
<feature type="domain" description="PNPLA" evidence="2">
    <location>
        <begin position="24"/>
        <end position="230"/>
    </location>
</feature>
<feature type="short sequence motif" description="GXGXXG" evidence="2">
    <location>
        <begin position="28"/>
        <end position="33"/>
    </location>
</feature>
<feature type="short sequence motif" description="GXSXG" evidence="2">
    <location>
        <begin position="66"/>
        <end position="70"/>
    </location>
</feature>
<feature type="short sequence motif" description="DGA/G" evidence="2">
    <location>
        <begin position="217"/>
        <end position="219"/>
    </location>
</feature>
<feature type="active site" description="Nucleophile" evidence="2">
    <location>
        <position position="68"/>
    </location>
</feature>
<feature type="active site" description="Proton acceptor" evidence="2">
    <location>
        <position position="217"/>
    </location>
</feature>
<comment type="function">
    <text evidence="1">Possesses non-specific lipolytic acyl hydrolase (LAH) activity. Hydrolyzes phospholipids as well as galactolipids. May play a role in disease resistance (By similarity).</text>
</comment>
<comment type="domain">
    <text evidence="1">The nitrogen atoms of the two glycine residues in the GGXR motif define the oxyanion hole, and stabilize the oxyanion that forms during the nucleophilic attack by the catalytic serine during substrate cleavage.</text>
</comment>
<comment type="similarity">
    <text evidence="3">Belongs to the patatin family.</text>
</comment>